<evidence type="ECO:0000255" key="1">
    <source>
        <dbReference type="HAMAP-Rule" id="MF_01678"/>
    </source>
</evidence>
<evidence type="ECO:0000305" key="2"/>
<keyword id="KW-0028">Amino-acid biosynthesis</keyword>
<keyword id="KW-0413">Isomerase</keyword>
<keyword id="KW-0486">Methionine biosynthesis</keyword>
<keyword id="KW-1185">Reference proteome</keyword>
<comment type="function">
    <text evidence="1">Catalyzes the interconversion of methylthioribose-1-phosphate (MTR-1-P) into methylthioribulose-1-phosphate (MTRu-1-P).</text>
</comment>
<comment type="catalytic activity">
    <reaction evidence="1">
        <text>5-(methylsulfanyl)-alpha-D-ribose 1-phosphate = 5-(methylsulfanyl)-D-ribulose 1-phosphate</text>
        <dbReference type="Rhea" id="RHEA:19989"/>
        <dbReference type="ChEBI" id="CHEBI:58533"/>
        <dbReference type="ChEBI" id="CHEBI:58548"/>
        <dbReference type="EC" id="5.3.1.23"/>
    </reaction>
</comment>
<comment type="pathway">
    <text evidence="1">Amino-acid biosynthesis; L-methionine biosynthesis via salvage pathway; L-methionine from S-methyl-5-thio-alpha-D-ribose 1-phosphate: step 1/6.</text>
</comment>
<comment type="similarity">
    <text evidence="2">Belongs to the eIF-2B alpha/beta/delta subunits family. MtnA subfamily.</text>
</comment>
<feature type="chain" id="PRO_0000357137" description="Methylthioribose-1-phosphate isomerase">
    <location>
        <begin position="1"/>
        <end position="339"/>
    </location>
</feature>
<feature type="active site" description="Proton donor" evidence="1">
    <location>
        <position position="229"/>
    </location>
</feature>
<feature type="binding site" evidence="1">
    <location>
        <begin position="52"/>
        <end position="54"/>
    </location>
    <ligand>
        <name>substrate</name>
    </ligand>
</feature>
<feature type="binding site" evidence="1">
    <location>
        <position position="89"/>
    </location>
    <ligand>
        <name>substrate</name>
    </ligand>
</feature>
<feature type="binding site" evidence="1">
    <location>
        <position position="188"/>
    </location>
    <ligand>
        <name>substrate</name>
    </ligand>
</feature>
<feature type="binding site" evidence="1">
    <location>
        <begin position="239"/>
        <end position="240"/>
    </location>
    <ligand>
        <name>substrate</name>
    </ligand>
</feature>
<feature type="site" description="Transition state stabilizer" evidence="1">
    <location>
        <position position="149"/>
    </location>
</feature>
<gene>
    <name evidence="1" type="primary">mtnA</name>
    <name type="ordered locus">Adeh_4186</name>
</gene>
<sequence length="339" mass="35237">MTVREPLRPVLYDDARDLVRLLDQKALPAEERWLELSTAEAVAAAIQDLTVRGAPAIGVAAAYALAVEARRGAGPERLRAAADLLARARPTAVNLAWAVRRMSARIGAPASDVLAEAHAIRDEDEAACRRIGALGAPLVPARARVLTHCNAGALATAGYGTALGVVRAAVEAGNAISVFADETRPFLQGARLTAWELHRDGIPVTVLTDGMAGWLMARGEIGCVVVGADRIAANGDVANKIGTYALAVLAAHHRLPFYVAAPWSTVDLATPTGADIPIEERASDEVVVLAGQRIAPAGVPARYPAFDVTPAALVTAIVTERGVVRAPHAAGLAALATAR</sequence>
<proteinExistence type="inferred from homology"/>
<accession>Q2IH96</accession>
<reference key="1">
    <citation type="submission" date="2006-01" db="EMBL/GenBank/DDBJ databases">
        <title>Complete sequence of Anaeromyxobacter dehalogenans 2CP-C.</title>
        <authorList>
            <person name="Copeland A."/>
            <person name="Lucas S."/>
            <person name="Lapidus A."/>
            <person name="Barry K."/>
            <person name="Detter J.C."/>
            <person name="Glavina T."/>
            <person name="Hammon N."/>
            <person name="Israni S."/>
            <person name="Pitluck S."/>
            <person name="Brettin T."/>
            <person name="Bruce D."/>
            <person name="Han C."/>
            <person name="Tapia R."/>
            <person name="Gilna P."/>
            <person name="Kiss H."/>
            <person name="Schmutz J."/>
            <person name="Larimer F."/>
            <person name="Land M."/>
            <person name="Kyrpides N."/>
            <person name="Anderson I."/>
            <person name="Sanford R.A."/>
            <person name="Ritalahti K.M."/>
            <person name="Thomas H.S."/>
            <person name="Kirby J.R."/>
            <person name="Zhulin I.B."/>
            <person name="Loeffler F.E."/>
            <person name="Richardson P."/>
        </authorList>
    </citation>
    <scope>NUCLEOTIDE SEQUENCE [LARGE SCALE GENOMIC DNA]</scope>
    <source>
        <strain>2CP-C</strain>
    </source>
</reference>
<protein>
    <recommendedName>
        <fullName evidence="1">Methylthioribose-1-phosphate isomerase</fullName>
        <shortName evidence="1">M1Pi</shortName>
        <shortName evidence="1">MTR-1-P isomerase</shortName>
        <ecNumber evidence="1">5.3.1.23</ecNumber>
    </recommendedName>
    <alternativeName>
        <fullName evidence="1">S-methyl-5-thioribose-1-phosphate isomerase</fullName>
    </alternativeName>
</protein>
<name>MTNA_ANADE</name>
<organism>
    <name type="scientific">Anaeromyxobacter dehalogenans (strain 2CP-C)</name>
    <dbReference type="NCBI Taxonomy" id="290397"/>
    <lineage>
        <taxon>Bacteria</taxon>
        <taxon>Pseudomonadati</taxon>
        <taxon>Myxococcota</taxon>
        <taxon>Myxococcia</taxon>
        <taxon>Myxococcales</taxon>
        <taxon>Cystobacterineae</taxon>
        <taxon>Anaeromyxobacteraceae</taxon>
        <taxon>Anaeromyxobacter</taxon>
    </lineage>
</organism>
<dbReference type="EC" id="5.3.1.23" evidence="1"/>
<dbReference type="EMBL" id="CP000251">
    <property type="protein sequence ID" value="ABC83950.1"/>
    <property type="molecule type" value="Genomic_DNA"/>
</dbReference>
<dbReference type="RefSeq" id="WP_011423232.1">
    <property type="nucleotide sequence ID" value="NC_007760.1"/>
</dbReference>
<dbReference type="SMR" id="Q2IH96"/>
<dbReference type="STRING" id="290397.Adeh_4186"/>
<dbReference type="KEGG" id="ade:Adeh_4186"/>
<dbReference type="eggNOG" id="COG0182">
    <property type="taxonomic scope" value="Bacteria"/>
</dbReference>
<dbReference type="HOGENOM" id="CLU_016218_1_2_7"/>
<dbReference type="OrthoDB" id="9803436at2"/>
<dbReference type="UniPathway" id="UPA00904">
    <property type="reaction ID" value="UER00874"/>
</dbReference>
<dbReference type="Proteomes" id="UP000001935">
    <property type="component" value="Chromosome"/>
</dbReference>
<dbReference type="GO" id="GO:0046523">
    <property type="term" value="F:S-methyl-5-thioribose-1-phosphate isomerase activity"/>
    <property type="evidence" value="ECO:0007669"/>
    <property type="project" value="UniProtKB-UniRule"/>
</dbReference>
<dbReference type="GO" id="GO:0019509">
    <property type="term" value="P:L-methionine salvage from methylthioadenosine"/>
    <property type="evidence" value="ECO:0007669"/>
    <property type="project" value="UniProtKB-UniRule"/>
</dbReference>
<dbReference type="FunFam" id="1.20.120.420:FF:000003">
    <property type="entry name" value="Methylthioribose-1-phosphate isomerase"/>
    <property type="match status" value="1"/>
</dbReference>
<dbReference type="FunFam" id="3.40.50.10470:FF:000006">
    <property type="entry name" value="Methylthioribose-1-phosphate isomerase"/>
    <property type="match status" value="1"/>
</dbReference>
<dbReference type="Gene3D" id="1.20.120.420">
    <property type="entry name" value="translation initiation factor eif-2b, domain 1"/>
    <property type="match status" value="1"/>
</dbReference>
<dbReference type="Gene3D" id="3.40.50.10470">
    <property type="entry name" value="Translation initiation factor eif-2b, domain 2"/>
    <property type="match status" value="1"/>
</dbReference>
<dbReference type="HAMAP" id="MF_01678">
    <property type="entry name" value="Salvage_MtnA"/>
    <property type="match status" value="1"/>
</dbReference>
<dbReference type="InterPro" id="IPR000649">
    <property type="entry name" value="IF-2B-related"/>
</dbReference>
<dbReference type="InterPro" id="IPR005251">
    <property type="entry name" value="IF-M1Pi"/>
</dbReference>
<dbReference type="InterPro" id="IPR042529">
    <property type="entry name" value="IF_2B-like_C"/>
</dbReference>
<dbReference type="InterPro" id="IPR011559">
    <property type="entry name" value="Initiation_fac_2B_a/b/d"/>
</dbReference>
<dbReference type="InterPro" id="IPR027363">
    <property type="entry name" value="M1Pi_N"/>
</dbReference>
<dbReference type="InterPro" id="IPR037171">
    <property type="entry name" value="NagB/RpiA_transferase-like"/>
</dbReference>
<dbReference type="NCBIfam" id="TIGR00524">
    <property type="entry name" value="eIF-2B_rel"/>
    <property type="match status" value="1"/>
</dbReference>
<dbReference type="NCBIfam" id="NF004326">
    <property type="entry name" value="PRK05720.1"/>
    <property type="match status" value="1"/>
</dbReference>
<dbReference type="NCBIfam" id="TIGR00512">
    <property type="entry name" value="salvage_mtnA"/>
    <property type="match status" value="1"/>
</dbReference>
<dbReference type="PANTHER" id="PTHR43475">
    <property type="entry name" value="METHYLTHIORIBOSE-1-PHOSPHATE ISOMERASE"/>
    <property type="match status" value="1"/>
</dbReference>
<dbReference type="PANTHER" id="PTHR43475:SF1">
    <property type="entry name" value="METHYLTHIORIBOSE-1-PHOSPHATE ISOMERASE"/>
    <property type="match status" value="1"/>
</dbReference>
<dbReference type="Pfam" id="PF01008">
    <property type="entry name" value="IF-2B"/>
    <property type="match status" value="1"/>
</dbReference>
<dbReference type="SUPFAM" id="SSF100950">
    <property type="entry name" value="NagB/RpiA/CoA transferase-like"/>
    <property type="match status" value="1"/>
</dbReference>